<feature type="signal peptide" evidence="1">
    <location>
        <begin position="1"/>
        <end position="20"/>
    </location>
</feature>
<feature type="chain" id="PRO_0000007282" description="Deoxyribonuclease-1">
    <location>
        <begin position="21"/>
        <end position="282"/>
    </location>
</feature>
<feature type="active site" evidence="1">
    <location>
        <position position="98"/>
    </location>
</feature>
<feature type="active site" evidence="1">
    <location>
        <position position="154"/>
    </location>
</feature>
<feature type="glycosylation site" description="N-linked (GlcNAc...) asparagine" evidence="4">
    <location>
        <position position="38"/>
    </location>
</feature>
<feature type="disulfide bond" evidence="1">
    <location>
        <begin position="121"/>
        <end position="124"/>
    </location>
</feature>
<feature type="disulfide bond" description="Essential for enzymatic activity" evidence="1">
    <location>
        <begin position="193"/>
        <end position="229"/>
    </location>
</feature>
<organism>
    <name type="scientific">Gallus gallus</name>
    <name type="common">Chicken</name>
    <dbReference type="NCBI Taxonomy" id="9031"/>
    <lineage>
        <taxon>Eukaryota</taxon>
        <taxon>Metazoa</taxon>
        <taxon>Chordata</taxon>
        <taxon>Craniata</taxon>
        <taxon>Vertebrata</taxon>
        <taxon>Euteleostomi</taxon>
        <taxon>Archelosauria</taxon>
        <taxon>Archosauria</taxon>
        <taxon>Dinosauria</taxon>
        <taxon>Saurischia</taxon>
        <taxon>Theropoda</taxon>
        <taxon>Coelurosauria</taxon>
        <taxon>Aves</taxon>
        <taxon>Neognathae</taxon>
        <taxon>Galloanserae</taxon>
        <taxon>Galliformes</taxon>
        <taxon>Phasianidae</taxon>
        <taxon>Phasianinae</taxon>
        <taxon>Gallus</taxon>
    </lineage>
</organism>
<protein>
    <recommendedName>
        <fullName>Deoxyribonuclease-1</fullName>
        <ecNumber evidence="5">3.1.21.1</ecNumber>
    </recommendedName>
    <alternativeName>
        <fullName>Deoxyribonuclease I</fullName>
        <shortName>DNase I</shortName>
    </alternativeName>
</protein>
<dbReference type="EC" id="3.1.21.1" evidence="5"/>
<dbReference type="EMBL" id="AJ131751">
    <property type="protein sequence ID" value="CAA10503.1"/>
    <property type="molecule type" value="mRNA"/>
</dbReference>
<dbReference type="RefSeq" id="NP_001384285.1">
    <property type="nucleotide sequence ID" value="NM_001397356.1"/>
</dbReference>
<dbReference type="RefSeq" id="NP_996840.1">
    <property type="nucleotide sequence ID" value="NM_206957.1"/>
</dbReference>
<dbReference type="SMR" id="Q9YGI5"/>
<dbReference type="FunCoup" id="Q9YGI5">
    <property type="interactions" value="515"/>
</dbReference>
<dbReference type="STRING" id="9031.ENSGALP00000062174"/>
<dbReference type="GlyCosmos" id="Q9YGI5">
    <property type="glycosylation" value="1 site, No reported glycans"/>
</dbReference>
<dbReference type="GlyGen" id="Q9YGI5">
    <property type="glycosylation" value="1 site"/>
</dbReference>
<dbReference type="PaxDb" id="9031-ENSGALP00000029321"/>
<dbReference type="Ensembl" id="ENSGALT00010040288.1">
    <property type="protein sequence ID" value="ENSGALP00010023361.1"/>
    <property type="gene ID" value="ENSGALG00010016709.1"/>
</dbReference>
<dbReference type="GeneID" id="395725"/>
<dbReference type="KEGG" id="gga:395725"/>
<dbReference type="VEuPathDB" id="HostDB:geneid_395725"/>
<dbReference type="eggNOG" id="ENOG502QQFT">
    <property type="taxonomic scope" value="Eukaryota"/>
</dbReference>
<dbReference type="GeneTree" id="ENSGT00950000182846"/>
<dbReference type="InParanoid" id="Q9YGI5"/>
<dbReference type="OMA" id="YHFVVSE"/>
<dbReference type="OrthoDB" id="10061407at2759"/>
<dbReference type="BRENDA" id="3.1.21.1">
    <property type="organism ID" value="1306"/>
</dbReference>
<dbReference type="PRO" id="PR:Q9YGI5"/>
<dbReference type="Proteomes" id="UP000000539">
    <property type="component" value="Chromosome 14"/>
</dbReference>
<dbReference type="GO" id="GO:0005576">
    <property type="term" value="C:extracellular region"/>
    <property type="evidence" value="ECO:0007669"/>
    <property type="project" value="UniProtKB-SubCell"/>
</dbReference>
<dbReference type="GO" id="GO:0005635">
    <property type="term" value="C:nuclear envelope"/>
    <property type="evidence" value="ECO:0007669"/>
    <property type="project" value="UniProtKB-SubCell"/>
</dbReference>
<dbReference type="GO" id="GO:0005634">
    <property type="term" value="C:nucleus"/>
    <property type="evidence" value="ECO:0000318"/>
    <property type="project" value="GO_Central"/>
</dbReference>
<dbReference type="GO" id="GO:0042588">
    <property type="term" value="C:zymogen granule"/>
    <property type="evidence" value="ECO:0007669"/>
    <property type="project" value="UniProtKB-SubCell"/>
</dbReference>
<dbReference type="GO" id="GO:0003779">
    <property type="term" value="F:actin binding"/>
    <property type="evidence" value="ECO:0007669"/>
    <property type="project" value="UniProtKB-KW"/>
</dbReference>
<dbReference type="GO" id="GO:0004530">
    <property type="term" value="F:deoxyribonuclease I activity"/>
    <property type="evidence" value="ECO:0000318"/>
    <property type="project" value="GO_Central"/>
</dbReference>
<dbReference type="GO" id="GO:0003677">
    <property type="term" value="F:DNA binding"/>
    <property type="evidence" value="ECO:0000318"/>
    <property type="project" value="GO_Central"/>
</dbReference>
<dbReference type="GO" id="GO:0006915">
    <property type="term" value="P:apoptotic process"/>
    <property type="evidence" value="ECO:0007669"/>
    <property type="project" value="UniProtKB-KW"/>
</dbReference>
<dbReference type="GO" id="GO:0006308">
    <property type="term" value="P:DNA catabolic process"/>
    <property type="evidence" value="ECO:0000250"/>
    <property type="project" value="UniProtKB"/>
</dbReference>
<dbReference type="GO" id="GO:0002283">
    <property type="term" value="P:neutrophil activation involved in immune response"/>
    <property type="evidence" value="ECO:0000250"/>
    <property type="project" value="UniProtKB"/>
</dbReference>
<dbReference type="GO" id="GO:0002673">
    <property type="term" value="P:regulation of acute inflammatory response"/>
    <property type="evidence" value="ECO:0000250"/>
    <property type="project" value="UniProtKB"/>
</dbReference>
<dbReference type="GO" id="GO:0070948">
    <property type="term" value="P:regulation of neutrophil mediated cytotoxicity"/>
    <property type="evidence" value="ECO:0000250"/>
    <property type="project" value="UniProtKB"/>
</dbReference>
<dbReference type="CDD" id="cd10282">
    <property type="entry name" value="DNase1"/>
    <property type="match status" value="1"/>
</dbReference>
<dbReference type="FunFam" id="3.60.10.10:FF:000047">
    <property type="entry name" value="Deoxyribonuclease"/>
    <property type="match status" value="1"/>
</dbReference>
<dbReference type="Gene3D" id="3.60.10.10">
    <property type="entry name" value="Endonuclease/exonuclease/phosphatase"/>
    <property type="match status" value="1"/>
</dbReference>
<dbReference type="InterPro" id="IPR018057">
    <property type="entry name" value="Deoxyribonuclease-1_AS"/>
</dbReference>
<dbReference type="InterPro" id="IPR016202">
    <property type="entry name" value="DNase_I"/>
</dbReference>
<dbReference type="InterPro" id="IPR033125">
    <property type="entry name" value="DNASE_I_2"/>
</dbReference>
<dbReference type="InterPro" id="IPR036691">
    <property type="entry name" value="Endo/exonu/phosph_ase_sf"/>
</dbReference>
<dbReference type="InterPro" id="IPR005135">
    <property type="entry name" value="Endo/exonuclease/phosphatase"/>
</dbReference>
<dbReference type="PANTHER" id="PTHR11371">
    <property type="entry name" value="DEOXYRIBONUCLEASE"/>
    <property type="match status" value="1"/>
</dbReference>
<dbReference type="PANTHER" id="PTHR11371:SF27">
    <property type="entry name" value="DEOXYRIBONUCLEASE-1"/>
    <property type="match status" value="1"/>
</dbReference>
<dbReference type="Pfam" id="PF03372">
    <property type="entry name" value="Exo_endo_phos"/>
    <property type="match status" value="1"/>
</dbReference>
<dbReference type="PIRSF" id="PIRSF000988">
    <property type="entry name" value="DNase_I_euk"/>
    <property type="match status" value="1"/>
</dbReference>
<dbReference type="PRINTS" id="PR00130">
    <property type="entry name" value="DNASEI"/>
</dbReference>
<dbReference type="SMART" id="SM00476">
    <property type="entry name" value="DNaseIc"/>
    <property type="match status" value="1"/>
</dbReference>
<dbReference type="SUPFAM" id="SSF56219">
    <property type="entry name" value="DNase I-like"/>
    <property type="match status" value="1"/>
</dbReference>
<dbReference type="PROSITE" id="PS00919">
    <property type="entry name" value="DNASE_I_1"/>
    <property type="match status" value="1"/>
</dbReference>
<dbReference type="PROSITE" id="PS00918">
    <property type="entry name" value="DNASE_I_2"/>
    <property type="match status" value="1"/>
</dbReference>
<gene>
    <name type="primary">DNASE1</name>
</gene>
<keyword id="KW-0009">Actin-binding</keyword>
<keyword id="KW-0053">Apoptosis</keyword>
<keyword id="KW-0106">Calcium</keyword>
<keyword id="KW-0968">Cytoplasmic vesicle</keyword>
<keyword id="KW-1015">Disulfide bond</keyword>
<keyword id="KW-0255">Endonuclease</keyword>
<keyword id="KW-0325">Glycoprotein</keyword>
<keyword id="KW-0378">Hydrolase</keyword>
<keyword id="KW-0540">Nuclease</keyword>
<keyword id="KW-0539">Nucleus</keyword>
<keyword id="KW-1185">Reference proteome</keyword>
<keyword id="KW-0964">Secreted</keyword>
<keyword id="KW-0732">Signal</keyword>
<name>DNAS1_CHICK</name>
<reference key="1">
    <citation type="journal article" date="2003" name="J. Protein Chem.">
        <title>Chicken deoxyribonuclease: purification, characterization, gene cloning and gene expression.</title>
        <authorList>
            <person name="Hu C.C."/>
            <person name="Lu S.C."/>
            <person name="Cheng C.C."/>
            <person name="Chen L.H."/>
            <person name="Liao T.H."/>
        </authorList>
    </citation>
    <scope>NUCLEOTIDE SEQUENCE [MRNA]</scope>
    <scope>CATALYTIC ACTIVITY</scope>
    <source>
        <tissue>Pancreas</tissue>
    </source>
</reference>
<accession>Q9YGI5</accession>
<sequence>MARLVLELLAAALLLRVAATLRISAFNIRTFGDSKMSNQTVAGFIVSILVQYDITLVQEVRDADLSSVKKLVSQLNSASSYPYSFLSSIPLGRNSYKEQYVFIYRSDIVSVLESYYYDDGCESCGTDIFSREPFIVKFSSPTTQLDEFVIVPLHAEPSSAPAEINALTDVYTDVINKWETNNIFFMGDFNADCSYVTAEQWPSIRLRSLSSCEWLIPDSADTTVTSTDCAYDRIVACGSALRQAVEYGSATVNNFQETLRIQNKDALAISDHFPVEVTLKAR</sequence>
<evidence type="ECO:0000250" key="1">
    <source>
        <dbReference type="UniProtKB" id="P00639"/>
    </source>
</evidence>
<evidence type="ECO:0000250" key="2">
    <source>
        <dbReference type="UniProtKB" id="P21704"/>
    </source>
</evidence>
<evidence type="ECO:0000250" key="3">
    <source>
        <dbReference type="UniProtKB" id="P24855"/>
    </source>
</evidence>
<evidence type="ECO:0000255" key="4"/>
<evidence type="ECO:0000269" key="5">
    <source>
    </source>
</evidence>
<evidence type="ECO:0000305" key="6"/>
<comment type="function">
    <text evidence="2 3 5">Serum endocuclease secreted into body fluids by a wide variety of exocrine and endocrine organs (PubMed:12739897). Expressed by non-hematopoietic tissues and preferentially cleaves protein-free DNA (By similarity). Among other functions, seems to be involved in cell death by apoptosis (By similarity). Binds specifically to G-actin and blocks actin polymerization (By similarity).</text>
</comment>
<comment type="catalytic activity">
    <reaction evidence="5">
        <text>Endonucleolytic cleavage to 5'-phosphodinucleotide and 5'-phosphooligonucleotide end-products.</text>
        <dbReference type="EC" id="3.1.21.1"/>
    </reaction>
</comment>
<comment type="cofactor">
    <cofactor evidence="3">
        <name>Ca(2+)</name>
        <dbReference type="ChEBI" id="CHEBI:29108"/>
    </cofactor>
    <cofactor evidence="3">
        <name>Mg(2+)</name>
        <dbReference type="ChEBI" id="CHEBI:18420"/>
    </cofactor>
    <text evidence="3">Divalent metal cations. Prefers Ca(2+) or Mg(2+).</text>
</comment>
<comment type="subcellular location">
    <subcellularLocation>
        <location evidence="3">Secreted</location>
    </subcellularLocation>
    <subcellularLocation>
        <location evidence="3">Zymogen granule</location>
    </subcellularLocation>
    <subcellularLocation>
        <location evidence="3">Nucleus envelope</location>
    </subcellularLocation>
    <text evidence="3">Secretory protein, stored in zymogen granules and found in the nuclear envelope.</text>
</comment>
<comment type="PTM">
    <text evidence="5">N-glycosylated.</text>
</comment>
<comment type="similarity">
    <text evidence="6">Belongs to the DNase I family.</text>
</comment>
<proteinExistence type="evidence at protein level"/>